<proteinExistence type="inferred from homology"/>
<sequence>MFLNSLKLKDFRNYKSLQVDFSNSINVLIGDNAQGKTNLLEAIYILSMARSHRDNNDRDLINWSSDFSDITGEVQSKMGKFPLEVRITRTGKKVFVNHLTENRLSDYIGNLHTVLFAPEDLDLVKGSPGVRRKFIDSEFGQMSANYLFNLLQYRSVLKNRNAYLKNIKWIGNNPKIDEDYLKVLNDQLIDFGSEIIFQRFVLVKELEKYSYQIHKAISRNEKLTIKYASFSGIDDQSTKEEISKIFNNQLLKNKTRELFLKSTSVGPHHDDLKFSINGKEVGSFASQGQQRTTALSVRLAEIEMMKYETGEYPILLLDDVLSELDGDRQTQLLNFIQDKVQTFLTTTSLSDVERDLIKDPKIYQVKGGTLVNG</sequence>
<dbReference type="EMBL" id="CP000411">
    <property type="protein sequence ID" value="ABJ56009.1"/>
    <property type="molecule type" value="Genomic_DNA"/>
</dbReference>
<dbReference type="RefSeq" id="WP_002817932.1">
    <property type="nucleotide sequence ID" value="NC_008528.1"/>
</dbReference>
<dbReference type="SMR" id="Q04HR3"/>
<dbReference type="STRING" id="203123.OEOE_0004"/>
<dbReference type="GeneID" id="75064856"/>
<dbReference type="KEGG" id="ooe:OEOE_0004"/>
<dbReference type="eggNOG" id="COG1195">
    <property type="taxonomic scope" value="Bacteria"/>
</dbReference>
<dbReference type="HOGENOM" id="CLU_040267_0_1_9"/>
<dbReference type="Proteomes" id="UP000000774">
    <property type="component" value="Chromosome"/>
</dbReference>
<dbReference type="GO" id="GO:0005737">
    <property type="term" value="C:cytoplasm"/>
    <property type="evidence" value="ECO:0007669"/>
    <property type="project" value="UniProtKB-SubCell"/>
</dbReference>
<dbReference type="GO" id="GO:0005524">
    <property type="term" value="F:ATP binding"/>
    <property type="evidence" value="ECO:0007669"/>
    <property type="project" value="UniProtKB-UniRule"/>
</dbReference>
<dbReference type="GO" id="GO:0003697">
    <property type="term" value="F:single-stranded DNA binding"/>
    <property type="evidence" value="ECO:0007669"/>
    <property type="project" value="UniProtKB-UniRule"/>
</dbReference>
<dbReference type="GO" id="GO:0006260">
    <property type="term" value="P:DNA replication"/>
    <property type="evidence" value="ECO:0007669"/>
    <property type="project" value="UniProtKB-UniRule"/>
</dbReference>
<dbReference type="GO" id="GO:0000731">
    <property type="term" value="P:DNA synthesis involved in DNA repair"/>
    <property type="evidence" value="ECO:0007669"/>
    <property type="project" value="TreeGrafter"/>
</dbReference>
<dbReference type="GO" id="GO:0006302">
    <property type="term" value="P:double-strand break repair"/>
    <property type="evidence" value="ECO:0007669"/>
    <property type="project" value="TreeGrafter"/>
</dbReference>
<dbReference type="GO" id="GO:0009432">
    <property type="term" value="P:SOS response"/>
    <property type="evidence" value="ECO:0007669"/>
    <property type="project" value="UniProtKB-UniRule"/>
</dbReference>
<dbReference type="CDD" id="cd03242">
    <property type="entry name" value="ABC_RecF"/>
    <property type="match status" value="1"/>
</dbReference>
<dbReference type="Gene3D" id="3.40.50.300">
    <property type="entry name" value="P-loop containing nucleotide triphosphate hydrolases"/>
    <property type="match status" value="1"/>
</dbReference>
<dbReference type="Gene3D" id="1.20.1050.90">
    <property type="entry name" value="RecF/RecN/SMC, N-terminal domain"/>
    <property type="match status" value="1"/>
</dbReference>
<dbReference type="HAMAP" id="MF_00365">
    <property type="entry name" value="RecF"/>
    <property type="match status" value="1"/>
</dbReference>
<dbReference type="InterPro" id="IPR001238">
    <property type="entry name" value="DNA-binding_RecF"/>
</dbReference>
<dbReference type="InterPro" id="IPR018078">
    <property type="entry name" value="DNA-binding_RecF_CS"/>
</dbReference>
<dbReference type="InterPro" id="IPR027417">
    <property type="entry name" value="P-loop_NTPase"/>
</dbReference>
<dbReference type="InterPro" id="IPR003395">
    <property type="entry name" value="RecF/RecN/SMC_N"/>
</dbReference>
<dbReference type="InterPro" id="IPR042174">
    <property type="entry name" value="RecF_2"/>
</dbReference>
<dbReference type="NCBIfam" id="TIGR00611">
    <property type="entry name" value="recf"/>
    <property type="match status" value="1"/>
</dbReference>
<dbReference type="PANTHER" id="PTHR32182">
    <property type="entry name" value="DNA REPLICATION AND REPAIR PROTEIN RECF"/>
    <property type="match status" value="1"/>
</dbReference>
<dbReference type="PANTHER" id="PTHR32182:SF0">
    <property type="entry name" value="DNA REPLICATION AND REPAIR PROTEIN RECF"/>
    <property type="match status" value="1"/>
</dbReference>
<dbReference type="Pfam" id="PF02463">
    <property type="entry name" value="SMC_N"/>
    <property type="match status" value="1"/>
</dbReference>
<dbReference type="SUPFAM" id="SSF52540">
    <property type="entry name" value="P-loop containing nucleoside triphosphate hydrolases"/>
    <property type="match status" value="1"/>
</dbReference>
<dbReference type="PROSITE" id="PS00617">
    <property type="entry name" value="RECF_1"/>
    <property type="match status" value="1"/>
</dbReference>
<dbReference type="PROSITE" id="PS00618">
    <property type="entry name" value="RECF_2"/>
    <property type="match status" value="1"/>
</dbReference>
<feature type="chain" id="PRO_1000048551" description="DNA replication and repair protein RecF">
    <location>
        <begin position="1"/>
        <end position="373"/>
    </location>
</feature>
<feature type="binding site" evidence="1">
    <location>
        <begin position="30"/>
        <end position="37"/>
    </location>
    <ligand>
        <name>ATP</name>
        <dbReference type="ChEBI" id="CHEBI:30616"/>
    </ligand>
</feature>
<name>RECF_OENOB</name>
<evidence type="ECO:0000255" key="1">
    <source>
        <dbReference type="HAMAP-Rule" id="MF_00365"/>
    </source>
</evidence>
<organism>
    <name type="scientific">Oenococcus oeni (strain ATCC BAA-331 / PSU-1)</name>
    <dbReference type="NCBI Taxonomy" id="203123"/>
    <lineage>
        <taxon>Bacteria</taxon>
        <taxon>Bacillati</taxon>
        <taxon>Bacillota</taxon>
        <taxon>Bacilli</taxon>
        <taxon>Lactobacillales</taxon>
        <taxon>Lactobacillaceae</taxon>
        <taxon>Oenococcus</taxon>
    </lineage>
</organism>
<comment type="function">
    <text evidence="1">The RecF protein is involved in DNA metabolism; it is required for DNA replication and normal SOS inducibility. RecF binds preferentially to single-stranded, linear DNA. It also seems to bind ATP.</text>
</comment>
<comment type="subcellular location">
    <subcellularLocation>
        <location evidence="1">Cytoplasm</location>
    </subcellularLocation>
</comment>
<comment type="similarity">
    <text evidence="1">Belongs to the RecF family.</text>
</comment>
<gene>
    <name evidence="1" type="primary">recF</name>
    <name type="ordered locus">OEOE_0004</name>
</gene>
<accession>Q04HR3</accession>
<protein>
    <recommendedName>
        <fullName evidence="1">DNA replication and repair protein RecF</fullName>
    </recommendedName>
</protein>
<keyword id="KW-0067">ATP-binding</keyword>
<keyword id="KW-0963">Cytoplasm</keyword>
<keyword id="KW-0227">DNA damage</keyword>
<keyword id="KW-0234">DNA repair</keyword>
<keyword id="KW-0235">DNA replication</keyword>
<keyword id="KW-0238">DNA-binding</keyword>
<keyword id="KW-0547">Nucleotide-binding</keyword>
<keyword id="KW-1185">Reference proteome</keyword>
<keyword id="KW-0742">SOS response</keyword>
<reference key="1">
    <citation type="journal article" date="2006" name="Proc. Natl. Acad. Sci. U.S.A.">
        <title>Comparative genomics of the lactic acid bacteria.</title>
        <authorList>
            <person name="Makarova K.S."/>
            <person name="Slesarev A."/>
            <person name="Wolf Y.I."/>
            <person name="Sorokin A."/>
            <person name="Mirkin B."/>
            <person name="Koonin E.V."/>
            <person name="Pavlov A."/>
            <person name="Pavlova N."/>
            <person name="Karamychev V."/>
            <person name="Polouchine N."/>
            <person name="Shakhova V."/>
            <person name="Grigoriev I."/>
            <person name="Lou Y."/>
            <person name="Rohksar D."/>
            <person name="Lucas S."/>
            <person name="Huang K."/>
            <person name="Goodstein D.M."/>
            <person name="Hawkins T."/>
            <person name="Plengvidhya V."/>
            <person name="Welker D."/>
            <person name="Hughes J."/>
            <person name="Goh Y."/>
            <person name="Benson A."/>
            <person name="Baldwin K."/>
            <person name="Lee J.-H."/>
            <person name="Diaz-Muniz I."/>
            <person name="Dosti B."/>
            <person name="Smeianov V."/>
            <person name="Wechter W."/>
            <person name="Barabote R."/>
            <person name="Lorca G."/>
            <person name="Altermann E."/>
            <person name="Barrangou R."/>
            <person name="Ganesan B."/>
            <person name="Xie Y."/>
            <person name="Rawsthorne H."/>
            <person name="Tamir D."/>
            <person name="Parker C."/>
            <person name="Breidt F."/>
            <person name="Broadbent J.R."/>
            <person name="Hutkins R."/>
            <person name="O'Sullivan D."/>
            <person name="Steele J."/>
            <person name="Unlu G."/>
            <person name="Saier M.H. Jr."/>
            <person name="Klaenhammer T."/>
            <person name="Richardson P."/>
            <person name="Kozyavkin S."/>
            <person name="Weimer B.C."/>
            <person name="Mills D.A."/>
        </authorList>
    </citation>
    <scope>NUCLEOTIDE SEQUENCE [LARGE SCALE GENOMIC DNA]</scope>
    <source>
        <strain>ATCC BAA-331 / PSU-1</strain>
    </source>
</reference>